<comment type="similarity">
    <text evidence="2">Belongs to the universal ribosomal protein uS2 family.</text>
</comment>
<dbReference type="EMBL" id="AE001273">
    <property type="protein sequence ID" value="AAC68275.1"/>
    <property type="molecule type" value="Genomic_DNA"/>
</dbReference>
<dbReference type="PIR" id="G71484">
    <property type="entry name" value="G71484"/>
</dbReference>
<dbReference type="RefSeq" id="NP_220199.1">
    <property type="nucleotide sequence ID" value="NC_000117.1"/>
</dbReference>
<dbReference type="RefSeq" id="WP_009872053.1">
    <property type="nucleotide sequence ID" value="NC_000117.1"/>
</dbReference>
<dbReference type="SMR" id="O84687"/>
<dbReference type="FunCoup" id="O84687">
    <property type="interactions" value="270"/>
</dbReference>
<dbReference type="STRING" id="272561.CT_680"/>
<dbReference type="EnsemblBacteria" id="AAC68275">
    <property type="protein sequence ID" value="AAC68275"/>
    <property type="gene ID" value="CT_680"/>
</dbReference>
<dbReference type="GeneID" id="884469"/>
<dbReference type="KEGG" id="ctr:CT_680"/>
<dbReference type="PATRIC" id="fig|272561.5.peg.747"/>
<dbReference type="HOGENOM" id="CLU_040318_1_3_0"/>
<dbReference type="InParanoid" id="O84687"/>
<dbReference type="OrthoDB" id="9808036at2"/>
<dbReference type="Proteomes" id="UP000000431">
    <property type="component" value="Chromosome"/>
</dbReference>
<dbReference type="GO" id="GO:0022627">
    <property type="term" value="C:cytosolic small ribosomal subunit"/>
    <property type="evidence" value="ECO:0000318"/>
    <property type="project" value="GO_Central"/>
</dbReference>
<dbReference type="GO" id="GO:0003735">
    <property type="term" value="F:structural constituent of ribosome"/>
    <property type="evidence" value="ECO:0000318"/>
    <property type="project" value="GO_Central"/>
</dbReference>
<dbReference type="GO" id="GO:0006412">
    <property type="term" value="P:translation"/>
    <property type="evidence" value="ECO:0007669"/>
    <property type="project" value="UniProtKB-UniRule"/>
</dbReference>
<dbReference type="CDD" id="cd01425">
    <property type="entry name" value="RPS2"/>
    <property type="match status" value="1"/>
</dbReference>
<dbReference type="Gene3D" id="3.40.50.10490">
    <property type="entry name" value="Glucose-6-phosphate isomerase like protein, domain 1"/>
    <property type="match status" value="1"/>
</dbReference>
<dbReference type="Gene3D" id="1.10.287.610">
    <property type="entry name" value="Helix hairpin bin"/>
    <property type="match status" value="1"/>
</dbReference>
<dbReference type="HAMAP" id="MF_00291_B">
    <property type="entry name" value="Ribosomal_uS2_B"/>
    <property type="match status" value="1"/>
</dbReference>
<dbReference type="InterPro" id="IPR001865">
    <property type="entry name" value="Ribosomal_uS2"/>
</dbReference>
<dbReference type="InterPro" id="IPR005706">
    <property type="entry name" value="Ribosomal_uS2_bac/mit/plastid"/>
</dbReference>
<dbReference type="InterPro" id="IPR018130">
    <property type="entry name" value="Ribosomal_uS2_CS"/>
</dbReference>
<dbReference type="InterPro" id="IPR023591">
    <property type="entry name" value="Ribosomal_uS2_flav_dom_sf"/>
</dbReference>
<dbReference type="NCBIfam" id="TIGR01011">
    <property type="entry name" value="rpsB_bact"/>
    <property type="match status" value="1"/>
</dbReference>
<dbReference type="PANTHER" id="PTHR12534">
    <property type="entry name" value="30S RIBOSOMAL PROTEIN S2 PROKARYOTIC AND ORGANELLAR"/>
    <property type="match status" value="1"/>
</dbReference>
<dbReference type="PANTHER" id="PTHR12534:SF0">
    <property type="entry name" value="SMALL RIBOSOMAL SUBUNIT PROTEIN US2M"/>
    <property type="match status" value="1"/>
</dbReference>
<dbReference type="Pfam" id="PF00318">
    <property type="entry name" value="Ribosomal_S2"/>
    <property type="match status" value="1"/>
</dbReference>
<dbReference type="PRINTS" id="PR00395">
    <property type="entry name" value="RIBOSOMALS2"/>
</dbReference>
<dbReference type="SUPFAM" id="SSF52313">
    <property type="entry name" value="Ribosomal protein S2"/>
    <property type="match status" value="1"/>
</dbReference>
<dbReference type="PROSITE" id="PS00962">
    <property type="entry name" value="RIBOSOMAL_S2_1"/>
    <property type="match status" value="1"/>
</dbReference>
<dbReference type="PROSITE" id="PS00963">
    <property type="entry name" value="RIBOSOMAL_S2_2"/>
    <property type="match status" value="1"/>
</dbReference>
<keyword id="KW-1185">Reference proteome</keyword>
<keyword id="KW-0687">Ribonucleoprotein</keyword>
<keyword id="KW-0689">Ribosomal protein</keyword>
<reference key="1">
    <citation type="journal article" date="1998" name="Science">
        <title>Genome sequence of an obligate intracellular pathogen of humans: Chlamydia trachomatis.</title>
        <authorList>
            <person name="Stephens R.S."/>
            <person name="Kalman S."/>
            <person name="Lammel C.J."/>
            <person name="Fan J."/>
            <person name="Marathe R."/>
            <person name="Aravind L."/>
            <person name="Mitchell W.P."/>
            <person name="Olinger L."/>
            <person name="Tatusov R.L."/>
            <person name="Zhao Q."/>
            <person name="Koonin E.V."/>
            <person name="Davis R.W."/>
        </authorList>
    </citation>
    <scope>NUCLEOTIDE SEQUENCE [LARGE SCALE GENOMIC DNA]</scope>
    <source>
        <strain>ATCC VR-885 / DSM 19411 / UW-3/Cx</strain>
    </source>
</reference>
<sequence>MEFSCTLTLKELLESGAHFGHQTSRWNPRMKPFIFEEKNGLYIIDLAKTLAQLKKAVACIQTTIGQEKSILFVGTKKQAKQIIREAAIECGEFFASERWLGGMLTNMATIRNSVKTLNRIELDLEASNSGLTKKELALLAKRHRKLLNNLEGVRHMNSLPGLLIVIDPGYERIAVAEAGKLGIPVMALVDTNCDPTPINHVIPCNDDSMKSIRLIVNVLKDAVIDAKKRLGVEILSPVRPAERPAEEAVEELPLPTGEAQDEASSKEGVLLWADIDNCEALK</sequence>
<protein>
    <recommendedName>
        <fullName evidence="2">Small ribosomal subunit protein uS2</fullName>
    </recommendedName>
    <alternativeName>
        <fullName>30S ribosomal protein S2</fullName>
    </alternativeName>
</protein>
<evidence type="ECO:0000256" key="1">
    <source>
        <dbReference type="SAM" id="MobiDB-lite"/>
    </source>
</evidence>
<evidence type="ECO:0000305" key="2"/>
<name>RS2_CHLTR</name>
<feature type="chain" id="PRO_0000134154" description="Small ribosomal subunit protein uS2">
    <location>
        <begin position="1"/>
        <end position="282"/>
    </location>
</feature>
<feature type="region of interest" description="Disordered" evidence="1">
    <location>
        <begin position="245"/>
        <end position="266"/>
    </location>
</feature>
<gene>
    <name type="primary">rpsB</name>
    <name type="synonym">rs2</name>
    <name type="ordered locus">CT_680</name>
</gene>
<accession>O84687</accession>
<proteinExistence type="inferred from homology"/>
<organism>
    <name type="scientific">Chlamydia trachomatis serovar D (strain ATCC VR-885 / DSM 19411 / UW-3/Cx)</name>
    <dbReference type="NCBI Taxonomy" id="272561"/>
    <lineage>
        <taxon>Bacteria</taxon>
        <taxon>Pseudomonadati</taxon>
        <taxon>Chlamydiota</taxon>
        <taxon>Chlamydiia</taxon>
        <taxon>Chlamydiales</taxon>
        <taxon>Chlamydiaceae</taxon>
        <taxon>Chlamydia/Chlamydophila group</taxon>
        <taxon>Chlamydia</taxon>
    </lineage>
</organism>